<dbReference type="EMBL" id="CP000284">
    <property type="protein sequence ID" value="ABE48326.1"/>
    <property type="molecule type" value="Genomic_DNA"/>
</dbReference>
<dbReference type="RefSeq" id="WP_011478423.1">
    <property type="nucleotide sequence ID" value="NC_007947.1"/>
</dbReference>
<dbReference type="SMR" id="Q1GXB2"/>
<dbReference type="STRING" id="265072.Mfla_0055"/>
<dbReference type="KEGG" id="mfa:Mfla_0055"/>
<dbReference type="eggNOG" id="COG0102">
    <property type="taxonomic scope" value="Bacteria"/>
</dbReference>
<dbReference type="HOGENOM" id="CLU_082184_2_2_4"/>
<dbReference type="OrthoDB" id="9801330at2"/>
<dbReference type="Proteomes" id="UP000002440">
    <property type="component" value="Chromosome"/>
</dbReference>
<dbReference type="GO" id="GO:0022625">
    <property type="term" value="C:cytosolic large ribosomal subunit"/>
    <property type="evidence" value="ECO:0007669"/>
    <property type="project" value="TreeGrafter"/>
</dbReference>
<dbReference type="GO" id="GO:0003729">
    <property type="term" value="F:mRNA binding"/>
    <property type="evidence" value="ECO:0007669"/>
    <property type="project" value="TreeGrafter"/>
</dbReference>
<dbReference type="GO" id="GO:0003735">
    <property type="term" value="F:structural constituent of ribosome"/>
    <property type="evidence" value="ECO:0007669"/>
    <property type="project" value="InterPro"/>
</dbReference>
<dbReference type="GO" id="GO:0017148">
    <property type="term" value="P:negative regulation of translation"/>
    <property type="evidence" value="ECO:0007669"/>
    <property type="project" value="TreeGrafter"/>
</dbReference>
<dbReference type="GO" id="GO:0006412">
    <property type="term" value="P:translation"/>
    <property type="evidence" value="ECO:0007669"/>
    <property type="project" value="UniProtKB-UniRule"/>
</dbReference>
<dbReference type="CDD" id="cd00392">
    <property type="entry name" value="Ribosomal_L13"/>
    <property type="match status" value="1"/>
</dbReference>
<dbReference type="FunFam" id="3.90.1180.10:FF:000001">
    <property type="entry name" value="50S ribosomal protein L13"/>
    <property type="match status" value="1"/>
</dbReference>
<dbReference type="Gene3D" id="3.90.1180.10">
    <property type="entry name" value="Ribosomal protein L13"/>
    <property type="match status" value="1"/>
</dbReference>
<dbReference type="HAMAP" id="MF_01366">
    <property type="entry name" value="Ribosomal_uL13"/>
    <property type="match status" value="1"/>
</dbReference>
<dbReference type="InterPro" id="IPR005822">
    <property type="entry name" value="Ribosomal_uL13"/>
</dbReference>
<dbReference type="InterPro" id="IPR005823">
    <property type="entry name" value="Ribosomal_uL13_bac-type"/>
</dbReference>
<dbReference type="InterPro" id="IPR036899">
    <property type="entry name" value="Ribosomal_uL13_sf"/>
</dbReference>
<dbReference type="NCBIfam" id="TIGR01066">
    <property type="entry name" value="rplM_bact"/>
    <property type="match status" value="1"/>
</dbReference>
<dbReference type="PANTHER" id="PTHR11545:SF2">
    <property type="entry name" value="LARGE RIBOSOMAL SUBUNIT PROTEIN UL13M"/>
    <property type="match status" value="1"/>
</dbReference>
<dbReference type="PANTHER" id="PTHR11545">
    <property type="entry name" value="RIBOSOMAL PROTEIN L13"/>
    <property type="match status" value="1"/>
</dbReference>
<dbReference type="Pfam" id="PF00572">
    <property type="entry name" value="Ribosomal_L13"/>
    <property type="match status" value="1"/>
</dbReference>
<dbReference type="PIRSF" id="PIRSF002181">
    <property type="entry name" value="Ribosomal_L13"/>
    <property type="match status" value="1"/>
</dbReference>
<dbReference type="SUPFAM" id="SSF52161">
    <property type="entry name" value="Ribosomal protein L13"/>
    <property type="match status" value="1"/>
</dbReference>
<accession>Q1GXB2</accession>
<organism>
    <name type="scientific">Methylobacillus flagellatus (strain ATCC 51484 / DSM 6875 / VKM B-1610 / KT)</name>
    <dbReference type="NCBI Taxonomy" id="265072"/>
    <lineage>
        <taxon>Bacteria</taxon>
        <taxon>Pseudomonadati</taxon>
        <taxon>Pseudomonadota</taxon>
        <taxon>Betaproteobacteria</taxon>
        <taxon>Nitrosomonadales</taxon>
        <taxon>Methylophilaceae</taxon>
        <taxon>Methylobacillus</taxon>
    </lineage>
</organism>
<proteinExistence type="inferred from homology"/>
<protein>
    <recommendedName>
        <fullName evidence="1">Large ribosomal subunit protein uL13</fullName>
    </recommendedName>
    <alternativeName>
        <fullName evidence="2">50S ribosomal protein L13</fullName>
    </alternativeName>
</protein>
<evidence type="ECO:0000255" key="1">
    <source>
        <dbReference type="HAMAP-Rule" id="MF_01366"/>
    </source>
</evidence>
<evidence type="ECO:0000305" key="2"/>
<feature type="chain" id="PRO_0000261749" description="Large ribosomal subunit protein uL13">
    <location>
        <begin position="1"/>
        <end position="146"/>
    </location>
</feature>
<gene>
    <name evidence="1" type="primary">rplM</name>
    <name type="ordered locus">Mfla_0055</name>
</gene>
<name>RL13_METFK</name>
<sequence length="146" mass="16323">MKTFSAKAHEVKRDWFVVDATDLVLGRLASEIAHRLRGKHKTIYTPHVDTGDYIVVINADKIKVTGNKALDKKYHRHSGYPGGISTTTFGKMQERFPGRALEKAVKGMLPKGPLGYAMFRKLKVYAGDKHDHVAQQPQPLVIQSQA</sequence>
<keyword id="KW-1185">Reference proteome</keyword>
<keyword id="KW-0687">Ribonucleoprotein</keyword>
<keyword id="KW-0689">Ribosomal protein</keyword>
<comment type="function">
    <text evidence="1">This protein is one of the early assembly proteins of the 50S ribosomal subunit, although it is not seen to bind rRNA by itself. It is important during the early stages of 50S assembly.</text>
</comment>
<comment type="subunit">
    <text evidence="1">Part of the 50S ribosomal subunit.</text>
</comment>
<comment type="similarity">
    <text evidence="1">Belongs to the universal ribosomal protein uL13 family.</text>
</comment>
<reference key="1">
    <citation type="submission" date="2006-03" db="EMBL/GenBank/DDBJ databases">
        <title>Complete sequence of Methylobacillus flagellatus KT.</title>
        <authorList>
            <consortium name="US DOE Joint Genome Institute"/>
            <person name="Copeland A."/>
            <person name="Lucas S."/>
            <person name="Lapidus A."/>
            <person name="Barry K."/>
            <person name="Detter J.C."/>
            <person name="Glavina del Rio T."/>
            <person name="Hammon N."/>
            <person name="Israni S."/>
            <person name="Dalin E."/>
            <person name="Tice H."/>
            <person name="Pitluck S."/>
            <person name="Brettin T."/>
            <person name="Bruce D."/>
            <person name="Han C."/>
            <person name="Tapia R."/>
            <person name="Saunders E."/>
            <person name="Gilna P."/>
            <person name="Schmutz J."/>
            <person name="Larimer F."/>
            <person name="Land M."/>
            <person name="Kyrpides N."/>
            <person name="Anderson I."/>
            <person name="Richardson P."/>
        </authorList>
    </citation>
    <scope>NUCLEOTIDE SEQUENCE [LARGE SCALE GENOMIC DNA]</scope>
    <source>
        <strain>ATCC 51484 / DSM 6875 / VKM B-1610 / KT</strain>
    </source>
</reference>